<organism>
    <name type="scientific">Felis catus</name>
    <name type="common">Cat</name>
    <name type="synonym">Felis silvestris catus</name>
    <dbReference type="NCBI Taxonomy" id="9685"/>
    <lineage>
        <taxon>Eukaryota</taxon>
        <taxon>Metazoa</taxon>
        <taxon>Chordata</taxon>
        <taxon>Craniata</taxon>
        <taxon>Vertebrata</taxon>
        <taxon>Euteleostomi</taxon>
        <taxon>Mammalia</taxon>
        <taxon>Eutheria</taxon>
        <taxon>Laurasiatheria</taxon>
        <taxon>Carnivora</taxon>
        <taxon>Feliformia</taxon>
        <taxon>Felidae</taxon>
        <taxon>Felinae</taxon>
        <taxon>Felis</taxon>
    </lineage>
</organism>
<evidence type="ECO:0000269" key="1">
    <source>
    </source>
</evidence>
<evidence type="ECO:0000305" key="2"/>
<evidence type="ECO:0007829" key="3">
    <source>
        <dbReference type="PDB" id="1ZKR"/>
    </source>
</evidence>
<protein>
    <recommendedName>
        <fullName>Major allergen I polypeptide chain 1</fullName>
    </recommendedName>
    <alternativeName>
        <fullName>AG4</fullName>
    </alternativeName>
    <alternativeName>
        <fullName>Allergen Cat-1</fullName>
    </alternativeName>
    <alternativeName>
        <fullName>Allergen Fel d I-A</fullName>
        <shortName>Allergen FdI</shortName>
        <shortName>Allergen Fel dI</shortName>
    </alternativeName>
    <allergenName>Fel d 1-A</allergenName>
</protein>
<accession>P30438</accession>
<accession>P30439</accession>
<gene>
    <name type="primary">CH1</name>
</gene>
<reference key="1">
    <citation type="journal article" date="1991" name="Proc. Natl. Acad. Sci. U.S.A.">
        <title>Amino acid sequence of Fel dI, the major allergen of the domestic cat: protein sequence analysis and cDNA cloning.</title>
        <authorList>
            <person name="Morgenstern J.P."/>
            <person name="Griffith I.J."/>
            <person name="Brauer A.W."/>
            <person name="Rogers B.L."/>
            <person name="Bond J.F."/>
            <person name="Chapman M.D."/>
            <person name="Kuo M.-C."/>
        </authorList>
    </citation>
    <scope>NUCLEOTIDE SEQUENCE [MRNA]</scope>
    <scope>PROTEIN SEQUENCE OF 23-92 (ISOFORMS 1 AND 2)</scope>
    <source>
        <tissue>Salivary gland</tissue>
    </source>
</reference>
<reference key="2">
    <citation type="journal article" date="1992" name="Gene">
        <title>Expression and genomic structure of the genes encoding FdI, the major allergen from the domestic cat.</title>
        <authorList>
            <person name="Griffith I.J."/>
            <person name="Craig S."/>
            <person name="Pollock J."/>
            <person name="Yu X.-B."/>
            <person name="Morgenstern J.P."/>
            <person name="Rogers B.L."/>
        </authorList>
    </citation>
    <scope>NUCLEOTIDE SEQUENCE [GENOMIC DNA] (ISOFORMS 1 AND 2)</scope>
    <source>
        <tissue>Liver</tissue>
    </source>
</reference>
<reference key="3">
    <citation type="journal article" date="1991" name="Mol. Immunol.">
        <title>Studies on the biochemical structure of the major cat allergen Felis domesticus I.</title>
        <authorList>
            <person name="Duffort O.A."/>
            <person name="Carreira J."/>
            <person name="Nitti G."/>
            <person name="Polo F."/>
            <person name="Lombardero M."/>
        </authorList>
    </citation>
    <scope>PROTEIN SEQUENCE OF 23-62</scope>
    <scope>CHARACTERIZATION</scope>
</reference>
<reference key="4">
    <citation type="journal article" date="1984" name="J. Allergy Clin. Immunol.">
        <title>Cat allergen 1: biochemical, antigenic, and allergenic properties.</title>
        <authorList>
            <person name="Leitermann K."/>
            <person name="Ohman J.L. Jr."/>
        </authorList>
    </citation>
    <scope>CHARACTERIZATION</scope>
</reference>
<reference key="5">
    <citation type="journal article" date="2003" name="J. Biol. Chem.">
        <title>The crystal structure of the major cat allergen Fel d 1, a member of the secretoglobin family.</title>
        <authorList>
            <person name="Kaiser L."/>
            <person name="Gronlund H."/>
            <person name="Sandalova T."/>
            <person name="Ljunggren H.G."/>
            <person name="van Hage-Hamsten M."/>
            <person name="Achour A."/>
            <person name="Schneider G."/>
        </authorList>
    </citation>
    <scope>X-RAY CRYSTALLOGRAPHY (1.85 ANGSTROMS)</scope>
</reference>
<comment type="subunit">
    <text>Heterotetramer composed of two non-covalently linked disulfide-linked heterodimer of chains 1 and 2.</text>
</comment>
<comment type="subcellular location">
    <subcellularLocation>
        <location>Secreted</location>
    </subcellularLocation>
</comment>
<comment type="alternative products">
    <event type="alternative splicing"/>
    <isoform>
        <id>P30438-1</id>
        <name>1</name>
        <name>Leader A</name>
        <name>Major</name>
        <sequence type="displayed"/>
    </isoform>
    <isoform>
        <id>P30438-2</id>
        <name>2</name>
        <name>Leader B</name>
        <name>Minor</name>
        <sequence type="described" ref="VSP_015665"/>
    </isoform>
</comment>
<comment type="tissue specificity">
    <text>Saliva and sebaceous glands.</text>
</comment>
<comment type="allergen">
    <text>Causes an allergic reaction in human. Binds to IgE. Major allergen produced by the domestic cat. Implicated as an asthma-inducing agent in human. This protein is sticky and easily adheres to walls, carpet, clothing, furniture and bedding.</text>
</comment>
<comment type="similarity">
    <text evidence="2">Belongs to the secretoglobin family.</text>
</comment>
<comment type="sequence caution" evidence="2">
    <conflict type="erroneous initiation">
        <sequence resource="EMBL-CDS" id="CAA44343"/>
    </conflict>
</comment>
<comment type="sequence caution" evidence="2">
    <conflict type="erroneous initiation">
        <sequence resource="EMBL-CDS" id="CAA44344"/>
    </conflict>
</comment>
<keyword id="KW-0002">3D-structure</keyword>
<keyword id="KW-0020">Allergen</keyword>
<keyword id="KW-0025">Alternative splicing</keyword>
<keyword id="KW-0903">Direct protein sequencing</keyword>
<keyword id="KW-1015">Disulfide bond</keyword>
<keyword id="KW-1185">Reference proteome</keyword>
<keyword id="KW-0964">Secreted</keyword>
<keyword id="KW-0732">Signal</keyword>
<dbReference type="EMBL" id="M74952">
    <property type="protein sequence ID" value="AAC37318.1"/>
    <property type="molecule type" value="mRNA"/>
</dbReference>
<dbReference type="EMBL" id="M74953">
    <property type="protein sequence ID" value="AAC41617.1"/>
    <property type="molecule type" value="mRNA"/>
</dbReference>
<dbReference type="EMBL" id="X62477">
    <property type="protein sequence ID" value="CAA44344.1"/>
    <property type="status" value="ALT_INIT"/>
    <property type="molecule type" value="Genomic_DNA"/>
</dbReference>
<dbReference type="EMBL" id="X62477">
    <property type="protein sequence ID" value="CAA44343.1"/>
    <property type="status" value="ALT_INIT"/>
    <property type="molecule type" value="Genomic_DNA"/>
</dbReference>
<dbReference type="PIR" id="A56413">
    <property type="entry name" value="A56413"/>
</dbReference>
<dbReference type="PIR" id="JC1136">
    <property type="entry name" value="JC1136"/>
</dbReference>
<dbReference type="RefSeq" id="NP_001041618.1">
    <property type="nucleotide sequence ID" value="NM_001048153.1"/>
</dbReference>
<dbReference type="PDB" id="1PUO">
    <property type="method" value="X-ray"/>
    <property type="resolution" value="1.85 A"/>
    <property type="chains" value="A/B=23-92"/>
</dbReference>
<dbReference type="PDB" id="1ZKR">
    <property type="method" value="X-ray"/>
    <property type="resolution" value="1.64 A"/>
    <property type="chains" value="A/B=23-92"/>
</dbReference>
<dbReference type="PDB" id="2EJN">
    <property type="method" value="X-ray"/>
    <property type="resolution" value="1.64 A"/>
    <property type="chains" value="A/B=23-92"/>
</dbReference>
<dbReference type="PDB" id="5VYF">
    <property type="method" value="X-ray"/>
    <property type="resolution" value="2.90 A"/>
    <property type="chains" value="C/F=23-92"/>
</dbReference>
<dbReference type="PDBsum" id="1PUO"/>
<dbReference type="PDBsum" id="1ZKR"/>
<dbReference type="PDBsum" id="2EJN"/>
<dbReference type="PDBsum" id="5VYF"/>
<dbReference type="SMR" id="P30438"/>
<dbReference type="Allergome" id="3278">
    <property type="allergen name" value="Fel d 1.0101"/>
</dbReference>
<dbReference type="Allergome" id="345">
    <property type="allergen name" value="Fel d 1"/>
</dbReference>
<dbReference type="PaxDb" id="9685-ENSFCAP00000022316"/>
<dbReference type="ABCD" id="P30438">
    <property type="antibodies" value="4 sequenced antibodies"/>
</dbReference>
<dbReference type="GeneID" id="677877"/>
<dbReference type="KEGG" id="fca:677877"/>
<dbReference type="eggNOG" id="ENOG502RTYP">
    <property type="taxonomic scope" value="Eukaryota"/>
</dbReference>
<dbReference type="InParanoid" id="P30438"/>
<dbReference type="OrthoDB" id="9450650at2759"/>
<dbReference type="EvolutionaryTrace" id="P30438"/>
<dbReference type="Proteomes" id="UP000011712">
    <property type="component" value="Unplaced"/>
</dbReference>
<dbReference type="GO" id="GO:0005576">
    <property type="term" value="C:extracellular region"/>
    <property type="evidence" value="ECO:0000318"/>
    <property type="project" value="GO_Central"/>
</dbReference>
<dbReference type="GO" id="GO:0005496">
    <property type="term" value="F:steroid binding"/>
    <property type="evidence" value="ECO:0000318"/>
    <property type="project" value="GO_Central"/>
</dbReference>
<dbReference type="CDD" id="cd00633">
    <property type="entry name" value="Secretoglobin"/>
    <property type="match status" value="1"/>
</dbReference>
<dbReference type="FunFam" id="1.20.920.50:FF:000001">
    <property type="entry name" value="Androgen-binding protein"/>
    <property type="match status" value="1"/>
</dbReference>
<dbReference type="Gene3D" id="1.20.920.50">
    <property type="match status" value="1"/>
</dbReference>
<dbReference type="InterPro" id="IPR006178">
    <property type="entry name" value="CH1-like"/>
</dbReference>
<dbReference type="InterPro" id="IPR016126">
    <property type="entry name" value="Secretoglobin"/>
</dbReference>
<dbReference type="InterPro" id="IPR053723">
    <property type="entry name" value="Secretoglobin_Domain_sf"/>
</dbReference>
<dbReference type="InterPro" id="IPR035960">
    <property type="entry name" value="Secretoglobin_sf"/>
</dbReference>
<dbReference type="PANTHER" id="PTHR21226">
    <property type="entry name" value="ABPA10-RELATED"/>
    <property type="match status" value="1"/>
</dbReference>
<dbReference type="PANTHER" id="PTHR21226:SF8">
    <property type="entry name" value="ABPA10-RELATED"/>
    <property type="match status" value="1"/>
</dbReference>
<dbReference type="Pfam" id="PF01099">
    <property type="entry name" value="Uteroglobin"/>
    <property type="match status" value="1"/>
</dbReference>
<dbReference type="PRINTS" id="PR00827">
    <property type="entry name" value="FELALLERGEN"/>
</dbReference>
<dbReference type="SMART" id="SM00096">
    <property type="entry name" value="UTG"/>
    <property type="match status" value="1"/>
</dbReference>
<dbReference type="SUPFAM" id="SSF48201">
    <property type="entry name" value="Uteroglobin-like"/>
    <property type="match status" value="1"/>
</dbReference>
<dbReference type="PROSITE" id="PS51311">
    <property type="entry name" value="SCGB"/>
    <property type="match status" value="1"/>
</dbReference>
<proteinExistence type="evidence at protein level"/>
<feature type="signal peptide" evidence="1">
    <location>
        <begin position="1"/>
        <end position="22"/>
    </location>
</feature>
<feature type="chain" id="PRO_0000036370" description="Major allergen I polypeptide chain 1">
    <location>
        <begin position="23"/>
        <end position="92"/>
    </location>
</feature>
<feature type="disulfide bond" description="Interchain (with C-90 in chain 2)">
    <location>
        <position position="25"/>
    </location>
</feature>
<feature type="disulfide bond" description="Interchain (with C-65 in chain 2)">
    <location>
        <position position="66"/>
    </location>
</feature>
<feature type="disulfide bond" description="Interchain (with C-24 in chain 2)">
    <location>
        <position position="92"/>
    </location>
</feature>
<feature type="splice variant" id="VSP_015665" description="In isoform 2." evidence="2">
    <original>MKGACVLVLLWAALLLISGGN</original>
    <variation>MLDAALPPCPTVAATAD</variation>
    <location>
        <begin position="1"/>
        <end position="21"/>
    </location>
</feature>
<feature type="sequence variant">
    <original>K</original>
    <variation>N</variation>
    <location>
        <position position="51"/>
    </location>
</feature>
<feature type="sequence conflict" description="In Ref. 1; AAC37318." evidence="2" ref="1">
    <original>C</original>
    <variation>R</variation>
    <location>
        <position position="5"/>
    </location>
</feature>
<feature type="sequence conflict" description="In Ref. 1; AAC37318." evidence="2" ref="1">
    <original>S</original>
    <variation>W</variation>
    <location>
        <position position="18"/>
    </location>
</feature>
<feature type="sequence conflict" description="In Ref. 1; AAC41617/AAC37318." evidence="2" ref="1">
    <original>V</original>
    <variation>L</variation>
    <location>
        <position position="82"/>
    </location>
</feature>
<feature type="helix" evidence="3">
    <location>
        <begin position="26"/>
        <end position="37"/>
    </location>
</feature>
<feature type="helix" evidence="3">
    <location>
        <begin position="40"/>
        <end position="50"/>
    </location>
</feature>
<feature type="helix" evidence="3">
    <location>
        <begin position="54"/>
        <end position="70"/>
    </location>
</feature>
<feature type="helix" evidence="3">
    <location>
        <begin position="73"/>
        <end position="87"/>
    </location>
</feature>
<sequence length="92" mass="10086">MKGACVLVLLWAALLLISGGNCEICPAVKRDVDLFLTGTPDEYVEQVAQYKALPVVLENARILKNCVDAKMTEEDKENALSVLDKIYTSPLC</sequence>
<name>FEL1A_FELCA</name>